<proteinExistence type="inferred from homology"/>
<evidence type="ECO:0000250" key="1"/>
<evidence type="ECO:0000255" key="2"/>
<evidence type="ECO:0000255" key="3">
    <source>
        <dbReference type="PROSITE-ProRule" id="PRU10092"/>
    </source>
</evidence>
<evidence type="ECO:0000255" key="4">
    <source>
        <dbReference type="PROSITE-ProRule" id="PRU10093"/>
    </source>
</evidence>
<evidence type="ECO:0000256" key="5">
    <source>
        <dbReference type="SAM" id="MobiDB-lite"/>
    </source>
</evidence>
<evidence type="ECO:0000305" key="6"/>
<dbReference type="EC" id="3.4.19.12"/>
<dbReference type="EMBL" id="DS027054">
    <property type="protein sequence ID" value="EAW10716.1"/>
    <property type="status" value="ALT_SEQ"/>
    <property type="molecule type" value="Genomic_DNA"/>
</dbReference>
<dbReference type="RefSeq" id="XP_001272142.1">
    <property type="nucleotide sequence ID" value="XM_001272141.1"/>
</dbReference>
<dbReference type="SMR" id="A1CIL1"/>
<dbReference type="STRING" id="344612.A1CIL1"/>
<dbReference type="EnsemblFungi" id="EAW10716">
    <property type="protein sequence ID" value="EAW10716"/>
    <property type="gene ID" value="ACLA_051880"/>
</dbReference>
<dbReference type="GeneID" id="4703625"/>
<dbReference type="KEGG" id="act:ACLA_051880"/>
<dbReference type="eggNOG" id="KOG1864">
    <property type="taxonomic scope" value="Eukaryota"/>
</dbReference>
<dbReference type="OrthoDB" id="27652at2759"/>
<dbReference type="Proteomes" id="UP000006701">
    <property type="component" value="Unassembled WGS sequence"/>
</dbReference>
<dbReference type="GO" id="GO:0005829">
    <property type="term" value="C:cytosol"/>
    <property type="evidence" value="ECO:0007669"/>
    <property type="project" value="TreeGrafter"/>
</dbReference>
<dbReference type="GO" id="GO:0005634">
    <property type="term" value="C:nucleus"/>
    <property type="evidence" value="ECO:0007669"/>
    <property type="project" value="TreeGrafter"/>
</dbReference>
<dbReference type="GO" id="GO:0004843">
    <property type="term" value="F:cysteine-type deubiquitinase activity"/>
    <property type="evidence" value="ECO:0000250"/>
    <property type="project" value="UniProtKB"/>
</dbReference>
<dbReference type="GO" id="GO:0045013">
    <property type="term" value="P:carbon catabolite repression of transcription"/>
    <property type="evidence" value="ECO:0000250"/>
    <property type="project" value="UniProtKB"/>
</dbReference>
<dbReference type="GO" id="GO:0016579">
    <property type="term" value="P:protein deubiquitination"/>
    <property type="evidence" value="ECO:0007669"/>
    <property type="project" value="InterPro"/>
</dbReference>
<dbReference type="GO" id="GO:0006511">
    <property type="term" value="P:ubiquitin-dependent protein catabolic process"/>
    <property type="evidence" value="ECO:0000250"/>
    <property type="project" value="UniProtKB"/>
</dbReference>
<dbReference type="CDD" id="cd02663">
    <property type="entry name" value="Peptidase_C19G"/>
    <property type="match status" value="1"/>
</dbReference>
<dbReference type="FunFam" id="3.90.70.10:FF:000075">
    <property type="entry name" value="Ubiquitin carboxyl-terminal hydrolase creB"/>
    <property type="match status" value="1"/>
</dbReference>
<dbReference type="Gene3D" id="3.90.70.10">
    <property type="entry name" value="Cysteine proteinases"/>
    <property type="match status" value="1"/>
</dbReference>
<dbReference type="InterPro" id="IPR038765">
    <property type="entry name" value="Papain-like_cys_pep_sf"/>
</dbReference>
<dbReference type="InterPro" id="IPR050164">
    <property type="entry name" value="Peptidase_C19"/>
</dbReference>
<dbReference type="InterPro" id="IPR001394">
    <property type="entry name" value="Peptidase_C19_UCH"/>
</dbReference>
<dbReference type="InterPro" id="IPR018200">
    <property type="entry name" value="USP_CS"/>
</dbReference>
<dbReference type="InterPro" id="IPR028889">
    <property type="entry name" value="USP_dom"/>
</dbReference>
<dbReference type="PANTHER" id="PTHR24006:SF733">
    <property type="entry name" value="RE52890P"/>
    <property type="match status" value="1"/>
</dbReference>
<dbReference type="PANTHER" id="PTHR24006">
    <property type="entry name" value="UBIQUITIN CARBOXYL-TERMINAL HYDROLASE"/>
    <property type="match status" value="1"/>
</dbReference>
<dbReference type="Pfam" id="PF00443">
    <property type="entry name" value="UCH"/>
    <property type="match status" value="1"/>
</dbReference>
<dbReference type="SUPFAM" id="SSF54001">
    <property type="entry name" value="Cysteine proteinases"/>
    <property type="match status" value="1"/>
</dbReference>
<dbReference type="PROSITE" id="PS00972">
    <property type="entry name" value="USP_1"/>
    <property type="match status" value="1"/>
</dbReference>
<dbReference type="PROSITE" id="PS00973">
    <property type="entry name" value="USP_2"/>
    <property type="match status" value="1"/>
</dbReference>
<dbReference type="PROSITE" id="PS50235">
    <property type="entry name" value="USP_3"/>
    <property type="match status" value="1"/>
</dbReference>
<accession>A1CIL1</accession>
<keyword id="KW-0175">Coiled coil</keyword>
<keyword id="KW-0378">Hydrolase</keyword>
<keyword id="KW-0645">Protease</keyword>
<keyword id="KW-1185">Reference proteome</keyword>
<keyword id="KW-0788">Thiol protease</keyword>
<keyword id="KW-0833">Ubl conjugation pathway</keyword>
<feature type="chain" id="PRO_0000395677" description="Probable ubiquitin carboxyl-terminal hydrolase creB">
    <location>
        <begin position="1"/>
        <end position="760"/>
    </location>
</feature>
<feature type="domain" description="USP">
    <location>
        <begin position="55"/>
        <end position="469"/>
    </location>
</feature>
<feature type="region of interest" description="Disordered" evidence="5">
    <location>
        <begin position="1"/>
        <end position="28"/>
    </location>
</feature>
<feature type="region of interest" description="Disordered" evidence="5">
    <location>
        <begin position="114"/>
        <end position="146"/>
    </location>
</feature>
<feature type="region of interest" description="Disordered" evidence="5">
    <location>
        <begin position="242"/>
        <end position="270"/>
    </location>
</feature>
<feature type="region of interest" description="Disordered" evidence="5">
    <location>
        <begin position="520"/>
        <end position="760"/>
    </location>
</feature>
<feature type="coiled-coil region" evidence="2">
    <location>
        <begin position="575"/>
        <end position="635"/>
    </location>
</feature>
<feature type="compositionally biased region" description="Polar residues" evidence="5">
    <location>
        <begin position="8"/>
        <end position="18"/>
    </location>
</feature>
<feature type="compositionally biased region" description="Polar residues" evidence="5">
    <location>
        <begin position="258"/>
        <end position="270"/>
    </location>
</feature>
<feature type="compositionally biased region" description="Basic and acidic residues" evidence="5">
    <location>
        <begin position="578"/>
        <end position="626"/>
    </location>
</feature>
<feature type="compositionally biased region" description="Basic and acidic residues" evidence="5">
    <location>
        <begin position="635"/>
        <end position="651"/>
    </location>
</feature>
<feature type="compositionally biased region" description="Basic and acidic residues" evidence="5">
    <location>
        <begin position="708"/>
        <end position="742"/>
    </location>
</feature>
<feature type="compositionally biased region" description="Basic residues" evidence="5">
    <location>
        <begin position="743"/>
        <end position="760"/>
    </location>
</feature>
<feature type="active site" description="Nucleophile" evidence="3 4">
    <location>
        <position position="64"/>
    </location>
</feature>
<feature type="active site" description="Proton acceptor" evidence="3 4">
    <location>
        <position position="420"/>
    </location>
</feature>
<comment type="function">
    <text evidence="1">Ubiquitin thioesterase component of the regulatory network controlling carbon source utilization through ubiquitination and deubiquitination involving creA, creB, creC, creD and acrB. Deubiquitinates the creA catabolic repressor and the quinate permease qutD. Also plays a role in response to carbon starvation and the control of extracellular proteases activity (By similarity).</text>
</comment>
<comment type="catalytic activity">
    <reaction>
        <text>Thiol-dependent hydrolysis of ester, thioester, amide, peptide and isopeptide bonds formed by the C-terminal Gly of ubiquitin (a 76-residue protein attached to proteins as an intracellular targeting signal).</text>
        <dbReference type="EC" id="3.4.19.12"/>
    </reaction>
</comment>
<comment type="subunit">
    <text evidence="1">Interacts with creA, creC and qutD.</text>
</comment>
<comment type="similarity">
    <text evidence="6">Belongs to the peptidase C19 family.</text>
</comment>
<comment type="sequence caution" evidence="6">
    <conflict type="erroneous gene model prediction">
        <sequence resource="EMBL-CDS" id="EAW10716"/>
    </conflict>
</comment>
<sequence>MGSFLRSFRNNAGSTTPSVGAVPAKKEVPIPPMTPLEKRLLDMGSIRGDGSDKFYGMENYGNTCYCNSILQCLYYSVPFREAVINYPTRTPIESLEAALAKSLRYPNPNAHLEAEAQAEKQRAANAQRPGMPPAQPQKPEDKDSPDYKKKMALQTLPLLEAQNNATSYGMSESLFTSLKDIFESVVGSQSRIGIVRPQQFLDVLRRDHEMFRTAMHQDAHEFLNLLLNEVVANVEAEASKQPAAIEKSLPAPDHAETVDQSASSGSKTPNTTRWVHELFEGTLTSETQCLTCEKVSQRDEIFLDLSVDLEQHSSVTSCLRKFSAEEMLCERNKFHCDNCGGLQEAEKRMKIKRLPRILALHLKRFKYTEDLQRLQKLFHRVVYPYHLRLFNTTDDAEDPDRLYELYAVVVHIGGGPYHGHYVAIIKTEDRGWLLFDDELVEPVDKNYVRNFFGDKPGLACAYVLFYQETTLEAVMKEQEQENMESNLSATDTNEAALKPNGSSPSHLAHVHSASYIPSLEEHNRPNGLKRAPTAPQLSTHHEHGDPESGAFSPVTATPPVPPIPEHLSAAPIPPKSDVQGKKERAREEKERKAAEKEREKAEKLRRKEQEARAKENQRREEAELKAALEASKASKAQEDRRQSPDHGKDKLGGGLSRLKRGSKSFSQRLGKDKETRSVSSLEAPPLPIPGHPISRDGPIPEQHQQQPDPKDDPFQDSHHPNKPMMKEDEQANHKDPKHERTGHGKWRSFSLRKKSFSILS</sequence>
<reference key="1">
    <citation type="journal article" date="2008" name="PLoS Genet.">
        <title>Genomic islands in the pathogenic filamentous fungus Aspergillus fumigatus.</title>
        <authorList>
            <person name="Fedorova N.D."/>
            <person name="Khaldi N."/>
            <person name="Joardar V.S."/>
            <person name="Maiti R."/>
            <person name="Amedeo P."/>
            <person name="Anderson M.J."/>
            <person name="Crabtree J."/>
            <person name="Silva J.C."/>
            <person name="Badger J.H."/>
            <person name="Albarraq A."/>
            <person name="Angiuoli S."/>
            <person name="Bussey H."/>
            <person name="Bowyer P."/>
            <person name="Cotty P.J."/>
            <person name="Dyer P.S."/>
            <person name="Egan A."/>
            <person name="Galens K."/>
            <person name="Fraser-Liggett C.M."/>
            <person name="Haas B.J."/>
            <person name="Inman J.M."/>
            <person name="Kent R."/>
            <person name="Lemieux S."/>
            <person name="Malavazi I."/>
            <person name="Orvis J."/>
            <person name="Roemer T."/>
            <person name="Ronning C.M."/>
            <person name="Sundaram J.P."/>
            <person name="Sutton G."/>
            <person name="Turner G."/>
            <person name="Venter J.C."/>
            <person name="White O.R."/>
            <person name="Whitty B.R."/>
            <person name="Youngman P."/>
            <person name="Wolfe K.H."/>
            <person name="Goldman G.H."/>
            <person name="Wortman J.R."/>
            <person name="Jiang B."/>
            <person name="Denning D.W."/>
            <person name="Nierman W.C."/>
        </authorList>
    </citation>
    <scope>NUCLEOTIDE SEQUENCE [LARGE SCALE GENOMIC DNA]</scope>
    <source>
        <strain>ATCC 1007 / CBS 513.65 / DSM 816 / NCTC 3887 / NRRL 1 / QM 1276 / 107</strain>
    </source>
</reference>
<gene>
    <name type="primary">creB</name>
    <name type="ORF">ACLA_051880</name>
</gene>
<protein>
    <recommendedName>
        <fullName>Probable ubiquitin carboxyl-terminal hydrolase creB</fullName>
        <ecNumber>3.4.19.12</ecNumber>
    </recommendedName>
    <alternativeName>
        <fullName>Carbon catabolite repression protein B</fullName>
    </alternativeName>
    <alternativeName>
        <fullName>Deubiquitinating enzyme creB</fullName>
    </alternativeName>
    <alternativeName>
        <fullName>Ubiquitin thioesterase creB</fullName>
    </alternativeName>
    <alternativeName>
        <fullName>Ubiquitin-hydrolyzing enzyme creB</fullName>
    </alternativeName>
    <alternativeName>
        <fullName>Ubiquitin-specific-processing protease creB</fullName>
    </alternativeName>
</protein>
<name>CREB_ASPCL</name>
<organism>
    <name type="scientific">Aspergillus clavatus (strain ATCC 1007 / CBS 513.65 / DSM 816 / NCTC 3887 / NRRL 1 / QM 1276 / 107)</name>
    <dbReference type="NCBI Taxonomy" id="344612"/>
    <lineage>
        <taxon>Eukaryota</taxon>
        <taxon>Fungi</taxon>
        <taxon>Dikarya</taxon>
        <taxon>Ascomycota</taxon>
        <taxon>Pezizomycotina</taxon>
        <taxon>Eurotiomycetes</taxon>
        <taxon>Eurotiomycetidae</taxon>
        <taxon>Eurotiales</taxon>
        <taxon>Aspergillaceae</taxon>
        <taxon>Aspergillus</taxon>
        <taxon>Aspergillus subgen. Fumigati</taxon>
    </lineage>
</organism>